<name>PYRH_BACAN</name>
<feature type="chain" id="PRO_0000143822" description="Uridylate kinase">
    <location>
        <begin position="1"/>
        <end position="240"/>
    </location>
</feature>
<feature type="region of interest" description="Involved in allosteric activation by GTP" evidence="1">
    <location>
        <begin position="20"/>
        <end position="25"/>
    </location>
</feature>
<feature type="binding site" evidence="1">
    <location>
        <begin position="12"/>
        <end position="15"/>
    </location>
    <ligand>
        <name>ATP</name>
        <dbReference type="ChEBI" id="CHEBI:30616"/>
    </ligand>
</feature>
<feature type="binding site" evidence="1">
    <location>
        <position position="54"/>
    </location>
    <ligand>
        <name>UMP</name>
        <dbReference type="ChEBI" id="CHEBI:57865"/>
    </ligand>
</feature>
<feature type="binding site" evidence="1">
    <location>
        <position position="55"/>
    </location>
    <ligand>
        <name>ATP</name>
        <dbReference type="ChEBI" id="CHEBI:30616"/>
    </ligand>
</feature>
<feature type="binding site" evidence="1">
    <location>
        <position position="59"/>
    </location>
    <ligand>
        <name>ATP</name>
        <dbReference type="ChEBI" id="CHEBI:30616"/>
    </ligand>
</feature>
<feature type="binding site" evidence="1">
    <location>
        <position position="74"/>
    </location>
    <ligand>
        <name>UMP</name>
        <dbReference type="ChEBI" id="CHEBI:57865"/>
    </ligand>
</feature>
<feature type="binding site" evidence="1">
    <location>
        <begin position="135"/>
        <end position="142"/>
    </location>
    <ligand>
        <name>UMP</name>
        <dbReference type="ChEBI" id="CHEBI:57865"/>
    </ligand>
</feature>
<feature type="binding site" evidence="1">
    <location>
        <position position="163"/>
    </location>
    <ligand>
        <name>ATP</name>
        <dbReference type="ChEBI" id="CHEBI:30616"/>
    </ligand>
</feature>
<feature type="binding site" evidence="1">
    <location>
        <position position="169"/>
    </location>
    <ligand>
        <name>ATP</name>
        <dbReference type="ChEBI" id="CHEBI:30616"/>
    </ligand>
</feature>
<feature type="binding site" evidence="1">
    <location>
        <position position="172"/>
    </location>
    <ligand>
        <name>ATP</name>
        <dbReference type="ChEBI" id="CHEBI:30616"/>
    </ligand>
</feature>
<reference key="1">
    <citation type="journal article" date="2003" name="Nature">
        <title>The genome sequence of Bacillus anthracis Ames and comparison to closely related bacteria.</title>
        <authorList>
            <person name="Read T.D."/>
            <person name="Peterson S.N."/>
            <person name="Tourasse N.J."/>
            <person name="Baillie L.W."/>
            <person name="Paulsen I.T."/>
            <person name="Nelson K.E."/>
            <person name="Tettelin H."/>
            <person name="Fouts D.E."/>
            <person name="Eisen J.A."/>
            <person name="Gill S.R."/>
            <person name="Holtzapple E.K."/>
            <person name="Okstad O.A."/>
            <person name="Helgason E."/>
            <person name="Rilstone J."/>
            <person name="Wu M."/>
            <person name="Kolonay J.F."/>
            <person name="Beanan M.J."/>
            <person name="Dodson R.J."/>
            <person name="Brinkac L.M."/>
            <person name="Gwinn M.L."/>
            <person name="DeBoy R.T."/>
            <person name="Madpu R."/>
            <person name="Daugherty S.C."/>
            <person name="Durkin A.S."/>
            <person name="Haft D.H."/>
            <person name="Nelson W.C."/>
            <person name="Peterson J.D."/>
            <person name="Pop M."/>
            <person name="Khouri H.M."/>
            <person name="Radune D."/>
            <person name="Benton J.L."/>
            <person name="Mahamoud Y."/>
            <person name="Jiang L."/>
            <person name="Hance I.R."/>
            <person name="Weidman J.F."/>
            <person name="Berry K.J."/>
            <person name="Plaut R.D."/>
            <person name="Wolf A.M."/>
            <person name="Watkins K.L."/>
            <person name="Nierman W.C."/>
            <person name="Hazen A."/>
            <person name="Cline R.T."/>
            <person name="Redmond C."/>
            <person name="Thwaite J.E."/>
            <person name="White O."/>
            <person name="Salzberg S.L."/>
            <person name="Thomason B."/>
            <person name="Friedlander A.M."/>
            <person name="Koehler T.M."/>
            <person name="Hanna P.C."/>
            <person name="Kolstoe A.-B."/>
            <person name="Fraser C.M."/>
        </authorList>
    </citation>
    <scope>NUCLEOTIDE SEQUENCE [LARGE SCALE GENOMIC DNA]</scope>
    <source>
        <strain>Ames / isolate Porton</strain>
    </source>
</reference>
<reference key="2">
    <citation type="journal article" date="2009" name="J. Bacteriol.">
        <title>The complete genome sequence of Bacillus anthracis Ames 'Ancestor'.</title>
        <authorList>
            <person name="Ravel J."/>
            <person name="Jiang L."/>
            <person name="Stanley S.T."/>
            <person name="Wilson M.R."/>
            <person name="Decker R.S."/>
            <person name="Read T.D."/>
            <person name="Worsham P."/>
            <person name="Keim P.S."/>
            <person name="Salzberg S.L."/>
            <person name="Fraser-Liggett C.M."/>
            <person name="Rasko D.A."/>
        </authorList>
    </citation>
    <scope>NUCLEOTIDE SEQUENCE [LARGE SCALE GENOMIC DNA]</scope>
    <source>
        <strain>Ames ancestor</strain>
    </source>
</reference>
<reference key="3">
    <citation type="submission" date="2004-01" db="EMBL/GenBank/DDBJ databases">
        <title>Complete genome sequence of Bacillus anthracis Sterne.</title>
        <authorList>
            <person name="Brettin T.S."/>
            <person name="Bruce D."/>
            <person name="Challacombe J.F."/>
            <person name="Gilna P."/>
            <person name="Han C."/>
            <person name="Hill K."/>
            <person name="Hitchcock P."/>
            <person name="Jackson P."/>
            <person name="Keim P."/>
            <person name="Longmire J."/>
            <person name="Lucas S."/>
            <person name="Okinaka R."/>
            <person name="Richardson P."/>
            <person name="Rubin E."/>
            <person name="Tice H."/>
        </authorList>
    </citation>
    <scope>NUCLEOTIDE SEQUENCE [LARGE SCALE GENOMIC DNA]</scope>
    <source>
        <strain>Sterne</strain>
    </source>
</reference>
<organism>
    <name type="scientific">Bacillus anthracis</name>
    <dbReference type="NCBI Taxonomy" id="1392"/>
    <lineage>
        <taxon>Bacteria</taxon>
        <taxon>Bacillati</taxon>
        <taxon>Bacillota</taxon>
        <taxon>Bacilli</taxon>
        <taxon>Bacillales</taxon>
        <taxon>Bacillaceae</taxon>
        <taxon>Bacillus</taxon>
        <taxon>Bacillus cereus group</taxon>
    </lineage>
</organism>
<comment type="function">
    <text evidence="1">Catalyzes the reversible phosphorylation of UMP to UDP.</text>
</comment>
<comment type="catalytic activity">
    <reaction evidence="1">
        <text>UMP + ATP = UDP + ADP</text>
        <dbReference type="Rhea" id="RHEA:24400"/>
        <dbReference type="ChEBI" id="CHEBI:30616"/>
        <dbReference type="ChEBI" id="CHEBI:57865"/>
        <dbReference type="ChEBI" id="CHEBI:58223"/>
        <dbReference type="ChEBI" id="CHEBI:456216"/>
        <dbReference type="EC" id="2.7.4.22"/>
    </reaction>
</comment>
<comment type="activity regulation">
    <text evidence="1">Allosterically activated by GTP. Inhibited by UTP.</text>
</comment>
<comment type="pathway">
    <text evidence="1">Pyrimidine metabolism; CTP biosynthesis via de novo pathway; UDP from UMP (UMPK route): step 1/1.</text>
</comment>
<comment type="subunit">
    <text evidence="1">Homohexamer.</text>
</comment>
<comment type="subcellular location">
    <subcellularLocation>
        <location evidence="1">Cytoplasm</location>
    </subcellularLocation>
</comment>
<comment type="similarity">
    <text evidence="1">Belongs to the UMP kinase family.</text>
</comment>
<dbReference type="EC" id="2.7.4.22" evidence="1"/>
<dbReference type="EMBL" id="AE016879">
    <property type="protein sequence ID" value="AAP27692.1"/>
    <property type="molecule type" value="Genomic_DNA"/>
</dbReference>
<dbReference type="EMBL" id="AE017334">
    <property type="protein sequence ID" value="AAT33077.2"/>
    <property type="molecule type" value="Genomic_DNA"/>
</dbReference>
<dbReference type="EMBL" id="AE017225">
    <property type="protein sequence ID" value="AAT55978.1"/>
    <property type="molecule type" value="Genomic_DNA"/>
</dbReference>
<dbReference type="RefSeq" id="NP_846206.1">
    <property type="nucleotide sequence ID" value="NC_003997.3"/>
</dbReference>
<dbReference type="RefSeq" id="WP_000042663.1">
    <property type="nucleotide sequence ID" value="NZ_WXXJ01000026.1"/>
</dbReference>
<dbReference type="RefSeq" id="YP_029927.1">
    <property type="nucleotide sequence ID" value="NC_005945.1"/>
</dbReference>
<dbReference type="SMR" id="Q81WL0"/>
<dbReference type="STRING" id="261594.GBAA_3963"/>
<dbReference type="DNASU" id="1086816"/>
<dbReference type="GeneID" id="93007287"/>
<dbReference type="KEGG" id="ban:BA_3963"/>
<dbReference type="KEGG" id="bar:GBAA_3963"/>
<dbReference type="KEGG" id="bat:BAS3676"/>
<dbReference type="PATRIC" id="fig|198094.11.peg.3933"/>
<dbReference type="eggNOG" id="COG0528">
    <property type="taxonomic scope" value="Bacteria"/>
</dbReference>
<dbReference type="HOGENOM" id="CLU_033861_0_0_9"/>
<dbReference type="OMA" id="LMGDKQF"/>
<dbReference type="OrthoDB" id="9807458at2"/>
<dbReference type="UniPathway" id="UPA00159">
    <property type="reaction ID" value="UER00275"/>
</dbReference>
<dbReference type="Proteomes" id="UP000000427">
    <property type="component" value="Chromosome"/>
</dbReference>
<dbReference type="Proteomes" id="UP000000594">
    <property type="component" value="Chromosome"/>
</dbReference>
<dbReference type="GO" id="GO:0005737">
    <property type="term" value="C:cytoplasm"/>
    <property type="evidence" value="ECO:0007669"/>
    <property type="project" value="UniProtKB-SubCell"/>
</dbReference>
<dbReference type="GO" id="GO:0005524">
    <property type="term" value="F:ATP binding"/>
    <property type="evidence" value="ECO:0007669"/>
    <property type="project" value="UniProtKB-KW"/>
</dbReference>
<dbReference type="GO" id="GO:0033862">
    <property type="term" value="F:UMP kinase activity"/>
    <property type="evidence" value="ECO:0007669"/>
    <property type="project" value="UniProtKB-EC"/>
</dbReference>
<dbReference type="GO" id="GO:0044210">
    <property type="term" value="P:'de novo' CTP biosynthetic process"/>
    <property type="evidence" value="ECO:0007669"/>
    <property type="project" value="UniProtKB-UniRule"/>
</dbReference>
<dbReference type="GO" id="GO:0006225">
    <property type="term" value="P:UDP biosynthetic process"/>
    <property type="evidence" value="ECO:0007669"/>
    <property type="project" value="TreeGrafter"/>
</dbReference>
<dbReference type="CDD" id="cd04254">
    <property type="entry name" value="AAK_UMPK-PyrH-Ec"/>
    <property type="match status" value="1"/>
</dbReference>
<dbReference type="FunFam" id="3.40.1160.10:FF:000001">
    <property type="entry name" value="Uridylate kinase"/>
    <property type="match status" value="1"/>
</dbReference>
<dbReference type="Gene3D" id="3.40.1160.10">
    <property type="entry name" value="Acetylglutamate kinase-like"/>
    <property type="match status" value="1"/>
</dbReference>
<dbReference type="HAMAP" id="MF_01220_B">
    <property type="entry name" value="PyrH_B"/>
    <property type="match status" value="1"/>
</dbReference>
<dbReference type="InterPro" id="IPR036393">
    <property type="entry name" value="AceGlu_kinase-like_sf"/>
</dbReference>
<dbReference type="InterPro" id="IPR001048">
    <property type="entry name" value="Asp/Glu/Uridylate_kinase"/>
</dbReference>
<dbReference type="InterPro" id="IPR011817">
    <property type="entry name" value="Uridylate_kinase"/>
</dbReference>
<dbReference type="InterPro" id="IPR015963">
    <property type="entry name" value="Uridylate_kinase_bac"/>
</dbReference>
<dbReference type="NCBIfam" id="TIGR02075">
    <property type="entry name" value="pyrH_bact"/>
    <property type="match status" value="1"/>
</dbReference>
<dbReference type="PANTHER" id="PTHR42833">
    <property type="entry name" value="URIDYLATE KINASE"/>
    <property type="match status" value="1"/>
</dbReference>
<dbReference type="PANTHER" id="PTHR42833:SF4">
    <property type="entry name" value="URIDYLATE KINASE PUMPKIN, CHLOROPLASTIC"/>
    <property type="match status" value="1"/>
</dbReference>
<dbReference type="Pfam" id="PF00696">
    <property type="entry name" value="AA_kinase"/>
    <property type="match status" value="1"/>
</dbReference>
<dbReference type="PIRSF" id="PIRSF005650">
    <property type="entry name" value="Uridylate_kin"/>
    <property type="match status" value="1"/>
</dbReference>
<dbReference type="SUPFAM" id="SSF53633">
    <property type="entry name" value="Carbamate kinase-like"/>
    <property type="match status" value="1"/>
</dbReference>
<proteinExistence type="inferred from homology"/>
<accession>Q81WL0</accession>
<accession>Q6HUR1</accession>
<accession>Q6KNZ2</accession>
<evidence type="ECO:0000255" key="1">
    <source>
        <dbReference type="HAMAP-Rule" id="MF_01220"/>
    </source>
</evidence>
<sequence length="240" mass="25870">MSKPKYNRVVLKLSGEALAGEQGFGINPAVIKSVAEQVKEIAELDVEVAVVVGGGNIWRGKIGSEMGMDRAGADYMGMLATVMNSLALQDSLENIGIQTRVQTSIEMRQVAEPYIRRKAVRHLEKKRVVIFAAGTGNPYFSTDTTAALRAAEIEADVILMAKNNVDGVYNADPSIDPTATKYETLTYLDVLKEGLGVMDSTASSLCMDNDIPLIVFSVMEKGNIKRAVLGENIGTVVRGK</sequence>
<gene>
    <name evidence="1" type="primary">pyrH</name>
    <name type="ordered locus">BA_3963</name>
    <name type="ordered locus">GBAA_3963</name>
    <name type="ordered locus">BAS3676</name>
</gene>
<protein>
    <recommendedName>
        <fullName evidence="1">Uridylate kinase</fullName>
        <shortName evidence="1">UK</shortName>
        <ecNumber evidence="1">2.7.4.22</ecNumber>
    </recommendedName>
    <alternativeName>
        <fullName evidence="1">Uridine monophosphate kinase</fullName>
        <shortName evidence="1">UMP kinase</shortName>
        <shortName evidence="1">UMPK</shortName>
    </alternativeName>
</protein>
<keyword id="KW-0021">Allosteric enzyme</keyword>
<keyword id="KW-0067">ATP-binding</keyword>
<keyword id="KW-0963">Cytoplasm</keyword>
<keyword id="KW-0418">Kinase</keyword>
<keyword id="KW-0547">Nucleotide-binding</keyword>
<keyword id="KW-0665">Pyrimidine biosynthesis</keyword>
<keyword id="KW-1185">Reference proteome</keyword>
<keyword id="KW-0808">Transferase</keyword>